<evidence type="ECO:0000255" key="1">
    <source>
        <dbReference type="HAMAP-Rule" id="MF_00633"/>
    </source>
</evidence>
<reference key="1">
    <citation type="journal article" date="1999" name="DNA Res.">
        <title>Complete structure of the chloroplast genome of Arabidopsis thaliana.</title>
        <authorList>
            <person name="Sato S."/>
            <person name="Nakamura Y."/>
            <person name="Kaneko T."/>
            <person name="Asamizu E."/>
            <person name="Tabata S."/>
        </authorList>
    </citation>
    <scope>NUCLEOTIDE SEQUENCE [LARGE SCALE GENOMIC DNA]</scope>
    <source>
        <strain>cv. Columbia</strain>
    </source>
</reference>
<reference key="2">
    <citation type="journal article" date="2009" name="J. Proteomics">
        <title>Phosphoproteomic analysis of nuclei-enriched fractions from Arabidopsis thaliana.</title>
        <authorList>
            <person name="Jones A.M.E."/>
            <person name="MacLean D."/>
            <person name="Studholme D.J."/>
            <person name="Serna-Sanz A."/>
            <person name="Andreasson E."/>
            <person name="Rathjen J.P."/>
            <person name="Peck S.C."/>
        </authorList>
    </citation>
    <scope>IDENTIFICATION BY MASS SPECTROMETRY [LARGE SCALE ANALYSIS]</scope>
    <source>
        <strain>cv. Columbia</strain>
    </source>
</reference>
<sequence length="215" mass="24153">MSKVYDWFEERLEIQAIADDITSKYVPPHVNIFYCLGGITLTCFLVQVATGFAMTFYYRPTVTEAFASVQYIMTEANFGWLIRSVHRWSASMMVLMMILHVFRVYLTGGFKKPRELTWVTGVVLGVLTASFGVTGYSLPWDQIGYWAVKIVTGVPDAIPVIGSPLVELLRGSASVGQSTLTRFYSLHTFVLPLLTAVFMLMHFLMIRKQGISGPL</sequence>
<geneLocation type="chloroplast"/>
<protein>
    <recommendedName>
        <fullName evidence="1">Cytochrome b6</fullName>
    </recommendedName>
</protein>
<feature type="chain" id="PRO_0000061782" description="Cytochrome b6">
    <location>
        <begin position="1"/>
        <end position="215"/>
    </location>
</feature>
<feature type="transmembrane region" description="Helical" evidence="1">
    <location>
        <begin position="32"/>
        <end position="52"/>
    </location>
</feature>
<feature type="transmembrane region" description="Helical" evidence="1">
    <location>
        <begin position="90"/>
        <end position="110"/>
    </location>
</feature>
<feature type="transmembrane region" description="Helical" evidence="1">
    <location>
        <begin position="116"/>
        <end position="136"/>
    </location>
</feature>
<feature type="transmembrane region" description="Helical" evidence="1">
    <location>
        <begin position="186"/>
        <end position="206"/>
    </location>
</feature>
<feature type="binding site" description="covalent" evidence="1">
    <location>
        <position position="35"/>
    </location>
    <ligand>
        <name>heme c</name>
        <dbReference type="ChEBI" id="CHEBI:61717"/>
    </ligand>
</feature>
<feature type="binding site" description="axial binding residue" evidence="1">
    <location>
        <position position="86"/>
    </location>
    <ligand>
        <name>heme b</name>
        <dbReference type="ChEBI" id="CHEBI:60344"/>
        <label>2</label>
    </ligand>
    <ligandPart>
        <name>Fe</name>
        <dbReference type="ChEBI" id="CHEBI:18248"/>
    </ligandPart>
</feature>
<feature type="binding site" description="axial binding residue" evidence="1">
    <location>
        <position position="100"/>
    </location>
    <ligand>
        <name>heme b</name>
        <dbReference type="ChEBI" id="CHEBI:60344"/>
        <label>1</label>
    </ligand>
    <ligandPart>
        <name>Fe</name>
        <dbReference type="ChEBI" id="CHEBI:18248"/>
    </ligandPart>
</feature>
<feature type="binding site" description="axial binding residue" evidence="1">
    <location>
        <position position="187"/>
    </location>
    <ligand>
        <name>heme b</name>
        <dbReference type="ChEBI" id="CHEBI:60344"/>
        <label>2</label>
    </ligand>
    <ligandPart>
        <name>Fe</name>
        <dbReference type="ChEBI" id="CHEBI:18248"/>
    </ligandPart>
</feature>
<feature type="binding site" description="axial binding residue" evidence="1">
    <location>
        <position position="202"/>
    </location>
    <ligand>
        <name>heme b</name>
        <dbReference type="ChEBI" id="CHEBI:60344"/>
        <label>1</label>
    </ligand>
    <ligandPart>
        <name>Fe</name>
        <dbReference type="ChEBI" id="CHEBI:18248"/>
    </ligandPart>
</feature>
<gene>
    <name evidence="1" type="primary">petB</name>
    <name type="ordered locus">AtCg00720</name>
</gene>
<accession>P56773</accession>
<name>CYB6_ARATH</name>
<comment type="function">
    <text evidence="1">Component of the cytochrome b6-f complex, which mediates electron transfer between photosystem II (PSII) and photosystem I (PSI), cyclic electron flow around PSI, and state transitions.</text>
</comment>
<comment type="cofactor">
    <cofactor evidence="1">
        <name>heme b</name>
        <dbReference type="ChEBI" id="CHEBI:60344"/>
    </cofactor>
    <text evidence="1">Binds 2 heme b groups non-covalently with two histidine residues as axial ligands.</text>
</comment>
<comment type="cofactor">
    <cofactor evidence="1">
        <name>heme c</name>
        <dbReference type="ChEBI" id="CHEBI:61717"/>
    </cofactor>
    <text evidence="1">Binds one heme group covalently by a single cysteine link with no axial amino acid ligand. This heme was named heme ci.</text>
</comment>
<comment type="subunit">
    <text evidence="1">The 4 large subunits of the cytochrome b6-f complex are cytochrome b6, subunit IV (17 kDa polypeptide, PetD), cytochrome f and the Rieske protein, while the 4 small subunits are PetG, PetL, PetM and PetN. The complex functions as a dimer.</text>
</comment>
<comment type="subcellular location">
    <subcellularLocation>
        <location evidence="1">Plastid</location>
        <location evidence="1">Chloroplast thylakoid membrane</location>
        <topology evidence="1">Multi-pass membrane protein</topology>
    </subcellularLocation>
</comment>
<comment type="miscellaneous">
    <text evidence="1">Heme 1 (or BH or b566) is high-potential and absorbs at about 566 nm, and heme 2 (or BL or b562) is low-potential and absorbs at about 562 nm.</text>
</comment>
<comment type="similarity">
    <text evidence="1">Belongs to the cytochrome b family. PetB subfamily.</text>
</comment>
<organism>
    <name type="scientific">Arabidopsis thaliana</name>
    <name type="common">Mouse-ear cress</name>
    <dbReference type="NCBI Taxonomy" id="3702"/>
    <lineage>
        <taxon>Eukaryota</taxon>
        <taxon>Viridiplantae</taxon>
        <taxon>Streptophyta</taxon>
        <taxon>Embryophyta</taxon>
        <taxon>Tracheophyta</taxon>
        <taxon>Spermatophyta</taxon>
        <taxon>Magnoliopsida</taxon>
        <taxon>eudicotyledons</taxon>
        <taxon>Gunneridae</taxon>
        <taxon>Pentapetalae</taxon>
        <taxon>rosids</taxon>
        <taxon>malvids</taxon>
        <taxon>Brassicales</taxon>
        <taxon>Brassicaceae</taxon>
        <taxon>Camelineae</taxon>
        <taxon>Arabidopsis</taxon>
    </lineage>
</organism>
<proteinExistence type="evidence at protein level"/>
<dbReference type="EMBL" id="AP000423">
    <property type="protein sequence ID" value="BAA84415.1"/>
    <property type="molecule type" value="Genomic_DNA"/>
</dbReference>
<dbReference type="RefSeq" id="NP_051088.1">
    <property type="nucleotide sequence ID" value="NC_000932.1"/>
</dbReference>
<dbReference type="SMR" id="P56773"/>
<dbReference type="BioGRID" id="29935">
    <property type="interactions" value="6"/>
</dbReference>
<dbReference type="FunCoup" id="P56773">
    <property type="interactions" value="309"/>
</dbReference>
<dbReference type="IntAct" id="P56773">
    <property type="interactions" value="2"/>
</dbReference>
<dbReference type="STRING" id="3702.P56773"/>
<dbReference type="TCDB" id="3.D.3.5.2">
    <property type="family name" value="the proton-translocating quinol:cytochrome c reductase (qcr) superfamily"/>
</dbReference>
<dbReference type="PaxDb" id="3702-ATCG00720.1"/>
<dbReference type="ProteomicsDB" id="220380"/>
<dbReference type="EnsemblPlants" id="ATCG00720.1">
    <property type="protein sequence ID" value="ATCG00720.1"/>
    <property type="gene ID" value="ATCG00720"/>
</dbReference>
<dbReference type="GeneID" id="844729"/>
<dbReference type="Gramene" id="ATCG00720.1">
    <property type="protein sequence ID" value="ATCG00720.1"/>
    <property type="gene ID" value="ATCG00720"/>
</dbReference>
<dbReference type="KEGG" id="ath:ArthCp053"/>
<dbReference type="Araport" id="ATCG00720"/>
<dbReference type="TAIR" id="ATCG00720">
    <property type="gene designation" value="PETB"/>
</dbReference>
<dbReference type="eggNOG" id="KOG4663">
    <property type="taxonomic scope" value="Eukaryota"/>
</dbReference>
<dbReference type="HOGENOM" id="CLU_031114_0_2_1"/>
<dbReference type="InParanoid" id="P56773"/>
<dbReference type="OMA" id="WDQLAIW"/>
<dbReference type="PRO" id="PR:P56773"/>
<dbReference type="Proteomes" id="UP000006548">
    <property type="component" value="Chloroplast Pltd"/>
</dbReference>
<dbReference type="ExpressionAtlas" id="P56773">
    <property type="expression patterns" value="baseline and differential"/>
</dbReference>
<dbReference type="GO" id="GO:0009507">
    <property type="term" value="C:chloroplast"/>
    <property type="evidence" value="ECO:0007005"/>
    <property type="project" value="TAIR"/>
</dbReference>
<dbReference type="GO" id="GO:0009534">
    <property type="term" value="C:chloroplast thylakoid"/>
    <property type="evidence" value="ECO:0007005"/>
    <property type="project" value="TAIR"/>
</dbReference>
<dbReference type="GO" id="GO:0009535">
    <property type="term" value="C:chloroplast thylakoid membrane"/>
    <property type="evidence" value="ECO:0007005"/>
    <property type="project" value="TAIR"/>
</dbReference>
<dbReference type="GO" id="GO:0009536">
    <property type="term" value="C:plastid"/>
    <property type="evidence" value="ECO:0007005"/>
    <property type="project" value="TAIR"/>
</dbReference>
<dbReference type="GO" id="GO:0009579">
    <property type="term" value="C:thylakoid"/>
    <property type="evidence" value="ECO:0007005"/>
    <property type="project" value="TAIR"/>
</dbReference>
<dbReference type="GO" id="GO:0045158">
    <property type="term" value="F:electron transporter, transferring electrons within cytochrome b6/f complex of photosystem II activity"/>
    <property type="evidence" value="ECO:0007669"/>
    <property type="project" value="UniProtKB-UniRule"/>
</dbReference>
<dbReference type="GO" id="GO:0046872">
    <property type="term" value="F:metal ion binding"/>
    <property type="evidence" value="ECO:0007669"/>
    <property type="project" value="UniProtKB-KW"/>
</dbReference>
<dbReference type="GO" id="GO:0003729">
    <property type="term" value="F:mRNA binding"/>
    <property type="evidence" value="ECO:0000314"/>
    <property type="project" value="TAIR"/>
</dbReference>
<dbReference type="GO" id="GO:0016491">
    <property type="term" value="F:oxidoreductase activity"/>
    <property type="evidence" value="ECO:0007669"/>
    <property type="project" value="InterPro"/>
</dbReference>
<dbReference type="GO" id="GO:0015979">
    <property type="term" value="P:photosynthesis"/>
    <property type="evidence" value="ECO:0007669"/>
    <property type="project" value="UniProtKB-UniRule"/>
</dbReference>
<dbReference type="GO" id="GO:0022904">
    <property type="term" value="P:respiratory electron transport chain"/>
    <property type="evidence" value="ECO:0007669"/>
    <property type="project" value="InterPro"/>
</dbReference>
<dbReference type="CDD" id="cd00284">
    <property type="entry name" value="Cytochrome_b_N"/>
    <property type="match status" value="1"/>
</dbReference>
<dbReference type="FunFam" id="1.20.810.10:FF:000001">
    <property type="entry name" value="Cytochrome b6"/>
    <property type="match status" value="1"/>
</dbReference>
<dbReference type="Gene3D" id="1.20.810.10">
    <property type="entry name" value="Cytochrome Bc1 Complex, Chain C"/>
    <property type="match status" value="1"/>
</dbReference>
<dbReference type="HAMAP" id="MF_00633">
    <property type="entry name" value="Cytb6_f_cytb6"/>
    <property type="match status" value="1"/>
</dbReference>
<dbReference type="InterPro" id="IPR005797">
    <property type="entry name" value="Cyt_b/b6_N"/>
</dbReference>
<dbReference type="InterPro" id="IPR023530">
    <property type="entry name" value="Cyt_B6_PetB"/>
</dbReference>
<dbReference type="InterPro" id="IPR027387">
    <property type="entry name" value="Cytb/b6-like_sf"/>
</dbReference>
<dbReference type="InterPro" id="IPR048259">
    <property type="entry name" value="Cytochrome_b_N_euk/bac"/>
</dbReference>
<dbReference type="InterPro" id="IPR016174">
    <property type="entry name" value="Di-haem_cyt_TM"/>
</dbReference>
<dbReference type="NCBIfam" id="NF002990">
    <property type="entry name" value="PRK03735.1"/>
    <property type="match status" value="1"/>
</dbReference>
<dbReference type="PANTHER" id="PTHR19271">
    <property type="entry name" value="CYTOCHROME B"/>
    <property type="match status" value="1"/>
</dbReference>
<dbReference type="PANTHER" id="PTHR19271:SF16">
    <property type="entry name" value="CYTOCHROME B"/>
    <property type="match status" value="1"/>
</dbReference>
<dbReference type="Pfam" id="PF00033">
    <property type="entry name" value="Cytochrome_B"/>
    <property type="match status" value="1"/>
</dbReference>
<dbReference type="PIRSF" id="PIRSF000032">
    <property type="entry name" value="Cytochrome_b6"/>
    <property type="match status" value="1"/>
</dbReference>
<dbReference type="SUPFAM" id="SSF81342">
    <property type="entry name" value="Transmembrane di-heme cytochromes"/>
    <property type="match status" value="1"/>
</dbReference>
<dbReference type="PROSITE" id="PS51002">
    <property type="entry name" value="CYTB_NTER"/>
    <property type="match status" value="1"/>
</dbReference>
<keyword id="KW-0150">Chloroplast</keyword>
<keyword id="KW-0249">Electron transport</keyword>
<keyword id="KW-0349">Heme</keyword>
<keyword id="KW-0408">Iron</keyword>
<keyword id="KW-0472">Membrane</keyword>
<keyword id="KW-0479">Metal-binding</keyword>
<keyword id="KW-0602">Photosynthesis</keyword>
<keyword id="KW-0934">Plastid</keyword>
<keyword id="KW-1185">Reference proteome</keyword>
<keyword id="KW-0793">Thylakoid</keyword>
<keyword id="KW-0812">Transmembrane</keyword>
<keyword id="KW-1133">Transmembrane helix</keyword>
<keyword id="KW-0813">Transport</keyword>